<comment type="function">
    <text evidence="1">Part of the high-affinity ATP-driven potassium transport (or Kdp) system, which catalyzes the hydrolysis of ATP coupled with the electrogenic transport of potassium into the cytoplasm. This subunit binds the periplasmic potassium ions and delivers the ions to the membrane domain of KdpB through an intramembrane tunnel.</text>
</comment>
<comment type="subunit">
    <text evidence="1">The system is composed of three essential subunits: KdpA, KdpB and KdpC.</text>
</comment>
<comment type="subcellular location">
    <subcellularLocation>
        <location evidence="1">Cell inner membrane</location>
        <topology evidence="1">Multi-pass membrane protein</topology>
    </subcellularLocation>
</comment>
<comment type="similarity">
    <text evidence="1">Belongs to the KdpA family.</text>
</comment>
<proteinExistence type="inferred from homology"/>
<reference key="1">
    <citation type="journal article" date="2003" name="Science">
        <title>A genomic view of the human-Bacteroides thetaiotaomicron symbiosis.</title>
        <authorList>
            <person name="Xu J."/>
            <person name="Bjursell M.K."/>
            <person name="Himrod J."/>
            <person name="Deng S."/>
            <person name="Carmichael L.K."/>
            <person name="Chiang H.C."/>
            <person name="Hooper L.V."/>
            <person name="Gordon J.I."/>
        </authorList>
    </citation>
    <scope>NUCLEOTIDE SEQUENCE [LARGE SCALE GENOMIC DNA]</scope>
    <source>
        <strain>ATCC 29148 / DSM 2079 / JCM 5827 / CCUG 10774 / NCTC 10582 / VPI-5482 / E50</strain>
    </source>
</reference>
<dbReference type="EMBL" id="AE015928">
    <property type="protein sequence ID" value="AAO77532.1"/>
    <property type="molecule type" value="Genomic_DNA"/>
</dbReference>
<dbReference type="RefSeq" id="NP_811338.1">
    <property type="nucleotide sequence ID" value="NC_004663.1"/>
</dbReference>
<dbReference type="RefSeq" id="WP_011108291.1">
    <property type="nucleotide sequence ID" value="NC_004663.1"/>
</dbReference>
<dbReference type="SMR" id="Q8A519"/>
<dbReference type="FunCoup" id="Q8A519">
    <property type="interactions" value="191"/>
</dbReference>
<dbReference type="STRING" id="226186.BT_2425"/>
<dbReference type="PaxDb" id="226186-BT_2425"/>
<dbReference type="EnsemblBacteria" id="AAO77532">
    <property type="protein sequence ID" value="AAO77532"/>
    <property type="gene ID" value="BT_2425"/>
</dbReference>
<dbReference type="GeneID" id="60923596"/>
<dbReference type="KEGG" id="bth:BT_2425"/>
<dbReference type="PATRIC" id="fig|226186.12.peg.2487"/>
<dbReference type="eggNOG" id="COG2060">
    <property type="taxonomic scope" value="Bacteria"/>
</dbReference>
<dbReference type="HOGENOM" id="CLU_018614_3_0_10"/>
<dbReference type="InParanoid" id="Q8A519"/>
<dbReference type="OrthoDB" id="9763796at2"/>
<dbReference type="Proteomes" id="UP000001414">
    <property type="component" value="Chromosome"/>
</dbReference>
<dbReference type="GO" id="GO:0005886">
    <property type="term" value="C:plasma membrane"/>
    <property type="evidence" value="ECO:0000318"/>
    <property type="project" value="GO_Central"/>
</dbReference>
<dbReference type="GO" id="GO:0008556">
    <property type="term" value="F:P-type potassium transmembrane transporter activity"/>
    <property type="evidence" value="ECO:0000318"/>
    <property type="project" value="GO_Central"/>
</dbReference>
<dbReference type="GO" id="GO:0030955">
    <property type="term" value="F:potassium ion binding"/>
    <property type="evidence" value="ECO:0007669"/>
    <property type="project" value="UniProtKB-UniRule"/>
</dbReference>
<dbReference type="GO" id="GO:0071805">
    <property type="term" value="P:potassium ion transmembrane transport"/>
    <property type="evidence" value="ECO:0000318"/>
    <property type="project" value="GO_Central"/>
</dbReference>
<dbReference type="HAMAP" id="MF_00275">
    <property type="entry name" value="KdpA"/>
    <property type="match status" value="1"/>
</dbReference>
<dbReference type="InterPro" id="IPR004623">
    <property type="entry name" value="KdpA"/>
</dbReference>
<dbReference type="NCBIfam" id="TIGR00680">
    <property type="entry name" value="kdpA"/>
    <property type="match status" value="1"/>
</dbReference>
<dbReference type="PANTHER" id="PTHR30607">
    <property type="entry name" value="POTASSIUM-TRANSPORTING ATPASE A CHAIN"/>
    <property type="match status" value="1"/>
</dbReference>
<dbReference type="PANTHER" id="PTHR30607:SF2">
    <property type="entry name" value="POTASSIUM-TRANSPORTING ATPASE POTASSIUM-BINDING SUBUNIT"/>
    <property type="match status" value="1"/>
</dbReference>
<dbReference type="Pfam" id="PF03814">
    <property type="entry name" value="KdpA"/>
    <property type="match status" value="1"/>
</dbReference>
<dbReference type="PIRSF" id="PIRSF001294">
    <property type="entry name" value="K_ATPaseA"/>
    <property type="match status" value="1"/>
</dbReference>
<sequence length="568" mass="62318">MNTEILGVVAQVALMVILAYPLGRYIAKVYKGEKTWSDFMAPIERVIYKVCGIDPKEEMNWKQFLKALLILNAFWFVWGMVLLVSQGWLPLNPDGNGPQTPDQAFNTCISFMVNCNLQHYSGESGLTYFTQLFVIMLFQFITAATGMAAMAGIMKSMAAKTTKTIGNFWHFLVVSCTRILLPLSLIVGFILILQGTPMGFDGKMKVTTLEGQEQMVSQGPAAAIVPIKQLGTNGGGYFGVNSSHPLENPTYLTNMVECWSILIIPMAMVLALGFYTRRKKLAYSIFGVMLFAFLVGVCINVSQEMGGNPRIDELGIAQDNGAMEGKEVRLGAGATALWSIVTTVTSNGSVNGMHDSTMPLSGMMEMLNMQINTWFGGVGVGWMNYYTFIIIAVFISGLMVGRTPEFLGKKVEAREMKIATIVALLHPFVILVFTAISSYIYVYHPDFVESEGGWLNNLGFHGLSEQLYEYTSCAANNGSGFEGLGDNTYFWNWTCGIVLILSRFLPIIGQVAIAGLLAQKKFIPESAGTLKTDTLTFGIMTFVVIFIVAALSFFPVHALSTIAEHLSL</sequence>
<protein>
    <recommendedName>
        <fullName evidence="1">Potassium-transporting ATPase potassium-binding subunit</fullName>
    </recommendedName>
    <alternativeName>
        <fullName evidence="1">ATP phosphohydrolase [potassium-transporting] A chain</fullName>
    </alternativeName>
    <alternativeName>
        <fullName evidence="1">Potassium-binding and translocating subunit A</fullName>
    </alternativeName>
    <alternativeName>
        <fullName evidence="1">Potassium-translocating ATPase A chain</fullName>
    </alternativeName>
</protein>
<accession>Q8A519</accession>
<keyword id="KW-0997">Cell inner membrane</keyword>
<keyword id="KW-1003">Cell membrane</keyword>
<keyword id="KW-0406">Ion transport</keyword>
<keyword id="KW-0472">Membrane</keyword>
<keyword id="KW-0630">Potassium</keyword>
<keyword id="KW-0633">Potassium transport</keyword>
<keyword id="KW-1185">Reference proteome</keyword>
<keyword id="KW-0812">Transmembrane</keyword>
<keyword id="KW-1133">Transmembrane helix</keyword>
<keyword id="KW-0813">Transport</keyword>
<evidence type="ECO:0000255" key="1">
    <source>
        <dbReference type="HAMAP-Rule" id="MF_00275"/>
    </source>
</evidence>
<gene>
    <name evidence="1" type="primary">kdpA</name>
    <name type="ordered locus">BT_2425</name>
</gene>
<name>KDPA_BACTN</name>
<organism>
    <name type="scientific">Bacteroides thetaiotaomicron (strain ATCC 29148 / DSM 2079 / JCM 5827 / CCUG 10774 / NCTC 10582 / VPI-5482 / E50)</name>
    <dbReference type="NCBI Taxonomy" id="226186"/>
    <lineage>
        <taxon>Bacteria</taxon>
        <taxon>Pseudomonadati</taxon>
        <taxon>Bacteroidota</taxon>
        <taxon>Bacteroidia</taxon>
        <taxon>Bacteroidales</taxon>
        <taxon>Bacteroidaceae</taxon>
        <taxon>Bacteroides</taxon>
    </lineage>
</organism>
<feature type="chain" id="PRO_1000114671" description="Potassium-transporting ATPase potassium-binding subunit">
    <location>
        <begin position="1"/>
        <end position="568"/>
    </location>
</feature>
<feature type="transmembrane region" description="Helical" evidence="1">
    <location>
        <begin position="3"/>
        <end position="23"/>
    </location>
</feature>
<feature type="transmembrane region" description="Helical" evidence="1">
    <location>
        <begin position="64"/>
        <end position="84"/>
    </location>
</feature>
<feature type="transmembrane region" description="Helical" evidence="1">
    <location>
        <begin position="133"/>
        <end position="153"/>
    </location>
</feature>
<feature type="transmembrane region" description="Helical" evidence="1">
    <location>
        <begin position="179"/>
        <end position="199"/>
    </location>
</feature>
<feature type="transmembrane region" description="Helical" evidence="1">
    <location>
        <begin position="255"/>
        <end position="275"/>
    </location>
</feature>
<feature type="transmembrane region" description="Helical" evidence="1">
    <location>
        <begin position="281"/>
        <end position="301"/>
    </location>
</feature>
<feature type="transmembrane region" description="Helical" evidence="1">
    <location>
        <begin position="375"/>
        <end position="395"/>
    </location>
</feature>
<feature type="transmembrane region" description="Helical" evidence="1">
    <location>
        <begin position="418"/>
        <end position="438"/>
    </location>
</feature>
<feature type="transmembrane region" description="Helical" evidence="1">
    <location>
        <begin position="497"/>
        <end position="517"/>
    </location>
</feature>
<feature type="transmembrane region" description="Helical" evidence="1">
    <location>
        <begin position="536"/>
        <end position="556"/>
    </location>
</feature>